<comment type="similarity">
    <text evidence="1">Belongs to the bacterial ribosomal protein bL27 family.</text>
</comment>
<keyword id="KW-1185">Reference proteome</keyword>
<keyword id="KW-0687">Ribonucleoprotein</keyword>
<keyword id="KW-0689">Ribosomal protein</keyword>
<organism>
    <name type="scientific">Mycobacterium marinum (strain ATCC BAA-535 / M)</name>
    <dbReference type="NCBI Taxonomy" id="216594"/>
    <lineage>
        <taxon>Bacteria</taxon>
        <taxon>Bacillati</taxon>
        <taxon>Actinomycetota</taxon>
        <taxon>Actinomycetes</taxon>
        <taxon>Mycobacteriales</taxon>
        <taxon>Mycobacteriaceae</taxon>
        <taxon>Mycobacterium</taxon>
        <taxon>Mycobacterium ulcerans group</taxon>
    </lineage>
</organism>
<proteinExistence type="inferred from homology"/>
<sequence>MAHKKGASSSRNGRDSAAQRLGVKRFGGQVVKAGEILVRQRGTKFHPGVNVGRGGDDTLFAKAAGAVQFGIKRGRKTINIVEPATQDA</sequence>
<name>RL27_MYCMM</name>
<protein>
    <recommendedName>
        <fullName evidence="1">Large ribosomal subunit protein bL27</fullName>
    </recommendedName>
    <alternativeName>
        <fullName evidence="3">50S ribosomal protein L27</fullName>
    </alternativeName>
</protein>
<gene>
    <name evidence="1" type="primary">rpmA</name>
    <name type="ordered locus">MMAR_3766</name>
</gene>
<reference key="1">
    <citation type="journal article" date="2008" name="Genome Res.">
        <title>Insights from the complete genome sequence of Mycobacterium marinum on the evolution of Mycobacterium tuberculosis.</title>
        <authorList>
            <person name="Stinear T.P."/>
            <person name="Seemann T."/>
            <person name="Harrison P.F."/>
            <person name="Jenkin G.A."/>
            <person name="Davies J.K."/>
            <person name="Johnson P.D."/>
            <person name="Abdellah Z."/>
            <person name="Arrowsmith C."/>
            <person name="Chillingworth T."/>
            <person name="Churcher C."/>
            <person name="Clarke K."/>
            <person name="Cronin A."/>
            <person name="Davis P."/>
            <person name="Goodhead I."/>
            <person name="Holroyd N."/>
            <person name="Jagels K."/>
            <person name="Lord A."/>
            <person name="Moule S."/>
            <person name="Mungall K."/>
            <person name="Norbertczak H."/>
            <person name="Quail M.A."/>
            <person name="Rabbinowitsch E."/>
            <person name="Walker D."/>
            <person name="White B."/>
            <person name="Whitehead S."/>
            <person name="Small P.L."/>
            <person name="Brosch R."/>
            <person name="Ramakrishnan L."/>
            <person name="Fischbach M.A."/>
            <person name="Parkhill J."/>
            <person name="Cole S.T."/>
        </authorList>
    </citation>
    <scope>NUCLEOTIDE SEQUENCE [LARGE SCALE GENOMIC DNA]</scope>
    <source>
        <strain>ATCC BAA-535 / M</strain>
    </source>
</reference>
<evidence type="ECO:0000255" key="1">
    <source>
        <dbReference type="HAMAP-Rule" id="MF_00539"/>
    </source>
</evidence>
<evidence type="ECO:0000256" key="2">
    <source>
        <dbReference type="SAM" id="MobiDB-lite"/>
    </source>
</evidence>
<evidence type="ECO:0000305" key="3"/>
<feature type="chain" id="PRO_1000128777" description="Large ribosomal subunit protein bL27">
    <location>
        <begin position="1"/>
        <end position="88"/>
    </location>
</feature>
<feature type="region of interest" description="Disordered" evidence="2">
    <location>
        <begin position="1"/>
        <end position="21"/>
    </location>
</feature>
<accession>B2HMG2</accession>
<dbReference type="EMBL" id="CP000854">
    <property type="protein sequence ID" value="ACC42182.1"/>
    <property type="molecule type" value="Genomic_DNA"/>
</dbReference>
<dbReference type="RefSeq" id="WP_012395375.1">
    <property type="nucleotide sequence ID" value="NC_010612.1"/>
</dbReference>
<dbReference type="SMR" id="B2HMG2"/>
<dbReference type="STRING" id="216594.MMAR_3766"/>
<dbReference type="KEGG" id="mmi:MMAR_3766"/>
<dbReference type="eggNOG" id="COG0211">
    <property type="taxonomic scope" value="Bacteria"/>
</dbReference>
<dbReference type="HOGENOM" id="CLU_095424_4_0_11"/>
<dbReference type="OrthoDB" id="9803474at2"/>
<dbReference type="Proteomes" id="UP000001190">
    <property type="component" value="Chromosome"/>
</dbReference>
<dbReference type="GO" id="GO:0022625">
    <property type="term" value="C:cytosolic large ribosomal subunit"/>
    <property type="evidence" value="ECO:0007669"/>
    <property type="project" value="TreeGrafter"/>
</dbReference>
<dbReference type="GO" id="GO:0003735">
    <property type="term" value="F:structural constituent of ribosome"/>
    <property type="evidence" value="ECO:0007669"/>
    <property type="project" value="InterPro"/>
</dbReference>
<dbReference type="GO" id="GO:0006412">
    <property type="term" value="P:translation"/>
    <property type="evidence" value="ECO:0007669"/>
    <property type="project" value="UniProtKB-UniRule"/>
</dbReference>
<dbReference type="FunFam" id="2.40.50.100:FF:000020">
    <property type="entry name" value="50S ribosomal protein L27"/>
    <property type="match status" value="1"/>
</dbReference>
<dbReference type="Gene3D" id="2.40.50.100">
    <property type="match status" value="1"/>
</dbReference>
<dbReference type="HAMAP" id="MF_00539">
    <property type="entry name" value="Ribosomal_bL27"/>
    <property type="match status" value="1"/>
</dbReference>
<dbReference type="InterPro" id="IPR001684">
    <property type="entry name" value="Ribosomal_bL27"/>
</dbReference>
<dbReference type="InterPro" id="IPR018261">
    <property type="entry name" value="Ribosomal_bL27_CS"/>
</dbReference>
<dbReference type="NCBIfam" id="TIGR00062">
    <property type="entry name" value="L27"/>
    <property type="match status" value="1"/>
</dbReference>
<dbReference type="PANTHER" id="PTHR15893:SF0">
    <property type="entry name" value="LARGE RIBOSOMAL SUBUNIT PROTEIN BL27M"/>
    <property type="match status" value="1"/>
</dbReference>
<dbReference type="PANTHER" id="PTHR15893">
    <property type="entry name" value="RIBOSOMAL PROTEIN L27"/>
    <property type="match status" value="1"/>
</dbReference>
<dbReference type="Pfam" id="PF01016">
    <property type="entry name" value="Ribosomal_L27"/>
    <property type="match status" value="1"/>
</dbReference>
<dbReference type="PRINTS" id="PR00063">
    <property type="entry name" value="RIBOSOMALL27"/>
</dbReference>
<dbReference type="SUPFAM" id="SSF110324">
    <property type="entry name" value="Ribosomal L27 protein-like"/>
    <property type="match status" value="1"/>
</dbReference>
<dbReference type="PROSITE" id="PS00831">
    <property type="entry name" value="RIBOSOMAL_L27"/>
    <property type="match status" value="1"/>
</dbReference>